<keyword id="KW-0963">Cytoplasm</keyword>
<keyword id="KW-0413">Isomerase</keyword>
<keyword id="KW-0464">Manganese</keyword>
<keyword id="KW-0479">Metal-binding</keyword>
<accession>A4VWC5</accession>
<proteinExistence type="inferred from homology"/>
<gene>
    <name evidence="1" type="primary">deoB</name>
    <name type="ordered locus">SSU05_1448</name>
</gene>
<name>DEOB_STRSY</name>
<dbReference type="EC" id="5.4.2.7" evidence="1"/>
<dbReference type="EMBL" id="CP000407">
    <property type="protein sequence ID" value="ABP90414.1"/>
    <property type="molecule type" value="Genomic_DNA"/>
</dbReference>
<dbReference type="SMR" id="A4VWC5"/>
<dbReference type="STRING" id="391295.SSU05_1448"/>
<dbReference type="KEGG" id="ssu:SSU05_1448"/>
<dbReference type="eggNOG" id="COG1015">
    <property type="taxonomic scope" value="Bacteria"/>
</dbReference>
<dbReference type="HOGENOM" id="CLU_053861_0_0_9"/>
<dbReference type="UniPathway" id="UPA00002">
    <property type="reaction ID" value="UER00467"/>
</dbReference>
<dbReference type="GO" id="GO:0005829">
    <property type="term" value="C:cytosol"/>
    <property type="evidence" value="ECO:0007669"/>
    <property type="project" value="TreeGrafter"/>
</dbReference>
<dbReference type="GO" id="GO:0000287">
    <property type="term" value="F:magnesium ion binding"/>
    <property type="evidence" value="ECO:0007669"/>
    <property type="project" value="InterPro"/>
</dbReference>
<dbReference type="GO" id="GO:0030145">
    <property type="term" value="F:manganese ion binding"/>
    <property type="evidence" value="ECO:0007669"/>
    <property type="project" value="UniProtKB-UniRule"/>
</dbReference>
<dbReference type="GO" id="GO:0008973">
    <property type="term" value="F:phosphopentomutase activity"/>
    <property type="evidence" value="ECO:0007669"/>
    <property type="project" value="UniProtKB-UniRule"/>
</dbReference>
<dbReference type="GO" id="GO:0006018">
    <property type="term" value="P:2-deoxyribose 1-phosphate catabolic process"/>
    <property type="evidence" value="ECO:0007669"/>
    <property type="project" value="UniProtKB-UniRule"/>
</dbReference>
<dbReference type="GO" id="GO:0006015">
    <property type="term" value="P:5-phosphoribose 1-diphosphate biosynthetic process"/>
    <property type="evidence" value="ECO:0007669"/>
    <property type="project" value="UniProtKB-UniPathway"/>
</dbReference>
<dbReference type="GO" id="GO:0043094">
    <property type="term" value="P:metabolic compound salvage"/>
    <property type="evidence" value="ECO:0007669"/>
    <property type="project" value="InterPro"/>
</dbReference>
<dbReference type="GO" id="GO:0009117">
    <property type="term" value="P:nucleotide metabolic process"/>
    <property type="evidence" value="ECO:0007669"/>
    <property type="project" value="InterPro"/>
</dbReference>
<dbReference type="CDD" id="cd16009">
    <property type="entry name" value="PPM"/>
    <property type="match status" value="1"/>
</dbReference>
<dbReference type="FunFam" id="3.30.70.1250:FF:000001">
    <property type="entry name" value="Phosphopentomutase"/>
    <property type="match status" value="1"/>
</dbReference>
<dbReference type="Gene3D" id="3.40.720.10">
    <property type="entry name" value="Alkaline Phosphatase, subunit A"/>
    <property type="match status" value="1"/>
</dbReference>
<dbReference type="Gene3D" id="3.30.70.1250">
    <property type="entry name" value="Phosphopentomutase"/>
    <property type="match status" value="1"/>
</dbReference>
<dbReference type="HAMAP" id="MF_00740">
    <property type="entry name" value="Phosphopentomut"/>
    <property type="match status" value="1"/>
</dbReference>
<dbReference type="InterPro" id="IPR017850">
    <property type="entry name" value="Alkaline_phosphatase_core_sf"/>
</dbReference>
<dbReference type="InterPro" id="IPR010045">
    <property type="entry name" value="DeoB"/>
</dbReference>
<dbReference type="InterPro" id="IPR006124">
    <property type="entry name" value="Metalloenzyme"/>
</dbReference>
<dbReference type="InterPro" id="IPR024052">
    <property type="entry name" value="Phosphopentomutase_DeoB_cap_sf"/>
</dbReference>
<dbReference type="NCBIfam" id="TIGR01696">
    <property type="entry name" value="deoB"/>
    <property type="match status" value="1"/>
</dbReference>
<dbReference type="NCBIfam" id="NF003766">
    <property type="entry name" value="PRK05362.1"/>
    <property type="match status" value="1"/>
</dbReference>
<dbReference type="PANTHER" id="PTHR21110">
    <property type="entry name" value="PHOSPHOPENTOMUTASE"/>
    <property type="match status" value="1"/>
</dbReference>
<dbReference type="PANTHER" id="PTHR21110:SF0">
    <property type="entry name" value="PHOSPHOPENTOMUTASE"/>
    <property type="match status" value="1"/>
</dbReference>
<dbReference type="Pfam" id="PF01676">
    <property type="entry name" value="Metalloenzyme"/>
    <property type="match status" value="1"/>
</dbReference>
<dbReference type="PIRSF" id="PIRSF001491">
    <property type="entry name" value="Ppentomutase"/>
    <property type="match status" value="1"/>
</dbReference>
<dbReference type="SUPFAM" id="SSF53649">
    <property type="entry name" value="Alkaline phosphatase-like"/>
    <property type="match status" value="1"/>
</dbReference>
<dbReference type="SUPFAM" id="SSF143856">
    <property type="entry name" value="DeoB insert domain-like"/>
    <property type="match status" value="1"/>
</dbReference>
<reference key="1">
    <citation type="journal article" date="2007" name="PLoS ONE">
        <title>A glimpse of streptococcal toxic shock syndrome from comparative genomics of S. suis 2 Chinese isolates.</title>
        <authorList>
            <person name="Chen C."/>
            <person name="Tang J."/>
            <person name="Dong W."/>
            <person name="Wang C."/>
            <person name="Feng Y."/>
            <person name="Wang J."/>
            <person name="Zheng F."/>
            <person name="Pan X."/>
            <person name="Liu D."/>
            <person name="Li M."/>
            <person name="Song Y."/>
            <person name="Zhu X."/>
            <person name="Sun H."/>
            <person name="Feng T."/>
            <person name="Guo Z."/>
            <person name="Ju A."/>
            <person name="Ge J."/>
            <person name="Dong Y."/>
            <person name="Sun W."/>
            <person name="Jiang Y."/>
            <person name="Wang J."/>
            <person name="Yan J."/>
            <person name="Yang H."/>
            <person name="Wang X."/>
            <person name="Gao G.F."/>
            <person name="Yang R."/>
            <person name="Wang J."/>
            <person name="Yu J."/>
        </authorList>
    </citation>
    <scope>NUCLEOTIDE SEQUENCE [LARGE SCALE GENOMIC DNA]</scope>
    <source>
        <strain>05ZYH33</strain>
    </source>
</reference>
<protein>
    <recommendedName>
        <fullName evidence="1">Phosphopentomutase</fullName>
        <ecNumber evidence="1">5.4.2.7</ecNumber>
    </recommendedName>
    <alternativeName>
        <fullName evidence="1">Phosphodeoxyribomutase</fullName>
    </alternativeName>
</protein>
<evidence type="ECO:0000255" key="1">
    <source>
        <dbReference type="HAMAP-Rule" id="MF_00740"/>
    </source>
</evidence>
<feature type="chain" id="PRO_1000046410" description="Phosphopentomutase">
    <location>
        <begin position="1"/>
        <end position="403"/>
    </location>
</feature>
<feature type="binding site" evidence="1">
    <location>
        <position position="13"/>
    </location>
    <ligand>
        <name>Mn(2+)</name>
        <dbReference type="ChEBI" id="CHEBI:29035"/>
        <label>1</label>
    </ligand>
</feature>
<feature type="binding site" evidence="1">
    <location>
        <position position="298"/>
    </location>
    <ligand>
        <name>Mn(2+)</name>
        <dbReference type="ChEBI" id="CHEBI:29035"/>
        <label>2</label>
    </ligand>
</feature>
<feature type="binding site" evidence="1">
    <location>
        <position position="303"/>
    </location>
    <ligand>
        <name>Mn(2+)</name>
        <dbReference type="ChEBI" id="CHEBI:29035"/>
        <label>2</label>
    </ligand>
</feature>
<feature type="binding site" evidence="1">
    <location>
        <position position="339"/>
    </location>
    <ligand>
        <name>Mn(2+)</name>
        <dbReference type="ChEBI" id="CHEBI:29035"/>
        <label>1</label>
    </ligand>
</feature>
<feature type="binding site" evidence="1">
    <location>
        <position position="340"/>
    </location>
    <ligand>
        <name>Mn(2+)</name>
        <dbReference type="ChEBI" id="CHEBI:29035"/>
        <label>1</label>
    </ligand>
</feature>
<feature type="binding site" evidence="1">
    <location>
        <position position="351"/>
    </location>
    <ligand>
        <name>Mn(2+)</name>
        <dbReference type="ChEBI" id="CHEBI:29035"/>
        <label>2</label>
    </ligand>
</feature>
<comment type="function">
    <text evidence="1">Isomerase that catalyzes the conversion of deoxy-ribose 1-phosphate (dRib-1-P) and ribose 1-phosphate (Rib-1-P) to deoxy-ribose 5-phosphate (dRib-5-P) and ribose 5-phosphate (Rib-5-P), respectively.</text>
</comment>
<comment type="catalytic activity">
    <reaction evidence="1">
        <text>2-deoxy-alpha-D-ribose 1-phosphate = 2-deoxy-D-ribose 5-phosphate</text>
        <dbReference type="Rhea" id="RHEA:27658"/>
        <dbReference type="ChEBI" id="CHEBI:57259"/>
        <dbReference type="ChEBI" id="CHEBI:62877"/>
        <dbReference type="EC" id="5.4.2.7"/>
    </reaction>
</comment>
<comment type="catalytic activity">
    <reaction evidence="1">
        <text>alpha-D-ribose 1-phosphate = D-ribose 5-phosphate</text>
        <dbReference type="Rhea" id="RHEA:18793"/>
        <dbReference type="ChEBI" id="CHEBI:57720"/>
        <dbReference type="ChEBI" id="CHEBI:78346"/>
        <dbReference type="EC" id="5.4.2.7"/>
    </reaction>
</comment>
<comment type="cofactor">
    <cofactor evidence="1">
        <name>Mn(2+)</name>
        <dbReference type="ChEBI" id="CHEBI:29035"/>
    </cofactor>
    <text evidence="1">Binds 2 manganese ions.</text>
</comment>
<comment type="pathway">
    <text evidence="1">Carbohydrate degradation; 2-deoxy-D-ribose 1-phosphate degradation; D-glyceraldehyde 3-phosphate and acetaldehyde from 2-deoxy-alpha-D-ribose 1-phosphate: step 1/2.</text>
</comment>
<comment type="subcellular location">
    <subcellularLocation>
        <location evidence="1">Cytoplasm</location>
    </subcellularLocation>
</comment>
<comment type="similarity">
    <text evidence="1">Belongs to the phosphopentomutase family.</text>
</comment>
<sequence length="403" mass="44231">MPKFKRVHLVVMDSVGIGAAPDSDKFFNAGVADTESDTLGHISEKAGLEVPNMTKIGLGNIPRDTALATVPAESHPTGYVTKLEEVSLGKDTMTGHWEIMGLNITEPFDTFWDGFPEEILTKIEEFSGRKIIREANKPYSGTAVIDDFGPRQMETGELIVYTSADPVLQIAAHEDIIPLDELYRICEYARSITLERPALLGRIIARPYVGEPGNFSRTANRHDYAVSPFEATVLNKLADAGVPTYSVGKISDIFNGSGITNDMGHTKSNMHGVDVLIDTLKLSDFEEGFSFTNLVDFDAVYGHRRNIEGYRDCLQEFDARIPEIIDNMREDDLLLITADHGNDPSYAGTDHTREYVPLLAYSKAFKGSGVLPVGHFADISATVAENFGVDTAMIGESFLSQLV</sequence>
<organism>
    <name type="scientific">Streptococcus suis (strain 05ZYH33)</name>
    <dbReference type="NCBI Taxonomy" id="391295"/>
    <lineage>
        <taxon>Bacteria</taxon>
        <taxon>Bacillati</taxon>
        <taxon>Bacillota</taxon>
        <taxon>Bacilli</taxon>
        <taxon>Lactobacillales</taxon>
        <taxon>Streptococcaceae</taxon>
        <taxon>Streptococcus</taxon>
    </lineage>
</organism>